<proteinExistence type="evidence at protein level"/>
<organism>
    <name type="scientific">Mus musculus</name>
    <name type="common">Mouse</name>
    <dbReference type="NCBI Taxonomy" id="10090"/>
    <lineage>
        <taxon>Eukaryota</taxon>
        <taxon>Metazoa</taxon>
        <taxon>Chordata</taxon>
        <taxon>Craniata</taxon>
        <taxon>Vertebrata</taxon>
        <taxon>Euteleostomi</taxon>
        <taxon>Mammalia</taxon>
        <taxon>Eutheria</taxon>
        <taxon>Euarchontoglires</taxon>
        <taxon>Glires</taxon>
        <taxon>Rodentia</taxon>
        <taxon>Myomorpha</taxon>
        <taxon>Muroidea</taxon>
        <taxon>Muridae</taxon>
        <taxon>Murinae</taxon>
        <taxon>Mus</taxon>
        <taxon>Mus</taxon>
    </lineage>
</organism>
<comment type="function">
    <text evidence="6">Transcription cofactor (PubMed:9192866). Binds to the LIM domain of a wide variety of LIM domain-containing transcription factors (PubMed:9192866).</text>
</comment>
<comment type="function">
    <molecule>Isoform 1</molecule>
    <text evidence="6">Regulates the transcriptional activity of LIM-containing proteins such as LHX3 or PITX1.</text>
</comment>
<comment type="subunit">
    <text evidence="3 4 5">Interacts with LHX9 (PubMed:10330499). Interacts with SLK; leading to negatively regulate SLK kinase activity (PubMed:19675209). Interacts with LMO4 (PubMed:9860983).</text>
</comment>
<comment type="subunit">
    <molecule>Isoform 1</molecule>
    <text evidence="6">Interacts with PITX1 (PubMed:9192866). Interacts with LHX3 (PubMed:9192866).</text>
</comment>
<comment type="interaction">
    <interactant intactId="EBI-15657830">
        <id>O55203</id>
    </interactant>
    <interactant intactId="EBI-15657872">
        <id>Q9WTV7</id>
        <label>Rlim</label>
    </interactant>
    <organismsDiffer>false</organismsDiffer>
    <experiments>2</experiments>
</comment>
<comment type="subcellular location">
    <subcellularLocation>
        <location evidence="9">Nucleus</location>
    </subcellularLocation>
    <text evidence="5">Colocalizes with SLK at leading edges (PubMed:19675209).</text>
</comment>
<comment type="subcellular location">
    <molecule>Isoform 1</molecule>
    <subcellularLocation>
        <location evidence="10">Nucleus</location>
    </subcellularLocation>
</comment>
<comment type="alternative products">
    <event type="alternative splicing"/>
    <isoform>
        <id>O55203-1</id>
        <name>1</name>
        <name>CLIM-1a</name>
        <sequence type="displayed"/>
    </isoform>
    <isoform>
        <id>O55203-2</id>
        <name>2</name>
        <name>CLIM-1b</name>
        <sequence type="described" ref="VSP_014369 VSP_014370"/>
    </isoform>
    <isoform>
        <id>O55203-3</id>
        <name>3</name>
        <sequence type="described" ref="VSP_027829 VSP_014369 VSP_014370"/>
    </isoform>
</comment>
<comment type="tissue specificity">
    <text evidence="6">Expressed in multiple tissues including heart, brain, liver, kidney, testis, lung and muscle, with expression highest in the brain, trigeminal ganglia, and lung.</text>
</comment>
<comment type="developmental stage">
    <text evidence="6">Expression in the embryo overlaps that of LIM domain-containing proteins (PubMed:9192866). Expressed widely in the embryo with highest expression in several regions of the brain, and the central nervous system ganglia (PubMed:9192866).</text>
</comment>
<comment type="PTM">
    <text evidence="4">Ubiquitinated by RLIM/RNF12, leading to its degradation by the proteasome.</text>
</comment>
<comment type="miscellaneous">
    <molecule>Isoform 2</molecule>
    <text evidence="9">Lacks LIM-binding domain.</text>
</comment>
<comment type="similarity">
    <text evidence="9">Belongs to the LDB family.</text>
</comment>
<keyword id="KW-0025">Alternative splicing</keyword>
<keyword id="KW-0539">Nucleus</keyword>
<keyword id="KW-1185">Reference proteome</keyword>
<keyword id="KW-0832">Ubl conjugation</keyword>
<name>LDB2_MOUSE</name>
<evidence type="ECO:0000255" key="1">
    <source>
        <dbReference type="PROSITE-ProRule" id="PRU01302"/>
    </source>
</evidence>
<evidence type="ECO:0000256" key="2">
    <source>
        <dbReference type="SAM" id="MobiDB-lite"/>
    </source>
</evidence>
<evidence type="ECO:0000269" key="3">
    <source>
    </source>
</evidence>
<evidence type="ECO:0000269" key="4">
    <source>
    </source>
</evidence>
<evidence type="ECO:0000269" key="5">
    <source>
    </source>
</evidence>
<evidence type="ECO:0000269" key="6">
    <source>
    </source>
</evidence>
<evidence type="ECO:0000303" key="7">
    <source>
    </source>
</evidence>
<evidence type="ECO:0000303" key="8">
    <source>
    </source>
</evidence>
<evidence type="ECO:0000305" key="9"/>
<evidence type="ECO:0000305" key="10">
    <source>
    </source>
</evidence>
<sequence>MSSTPHDPFYSSPFGPFYRRHTPYMVQPEYRIYEMNKRLQSRTEDSDNLWWDAFATEFFEDDATLTLSFCLEDGPKRYTIGRTLIPRYFSTVFEGGVTDLYYILKHSKESYHNSSITVDCDQCAMVTQHGKPMFTKVCTEGRLILEFTFDDLMRIKTWHFTIRQYRELVPRSILAMHAQDPQVLDQLSKNITRMGLTNFTLNYLRLCVILEPMQELMSRHKTYNLSPRDCLKTCLFQKWQRMVAPPAEPTRQPTTKRRKRKNSTSSTSNSSAGNTTNSAGSKKKTPAASLSLATQVPDVMVVGEPTLMGGEFGDEDERLITRLENTQYDAANGMDDEEDFNNSPALGNNSPWNSKPPATQETKSENAPPQASQ</sequence>
<dbReference type="EMBL" id="U89487">
    <property type="protein sequence ID" value="AAB96884.1"/>
    <property type="molecule type" value="mRNA"/>
</dbReference>
<dbReference type="EMBL" id="U89489">
    <property type="protein sequence ID" value="AAB96886.1"/>
    <property type="molecule type" value="mRNA"/>
</dbReference>
<dbReference type="EMBL" id="AK147160">
    <property type="protein sequence ID" value="BAE27725.1"/>
    <property type="molecule type" value="mRNA"/>
</dbReference>
<dbReference type="EMBL" id="AK146860">
    <property type="protein sequence ID" value="BAE27488.1"/>
    <property type="molecule type" value="mRNA"/>
</dbReference>
<dbReference type="EMBL" id="BC079611">
    <property type="protein sequence ID" value="AAH79611.1"/>
    <property type="molecule type" value="mRNA"/>
</dbReference>
<dbReference type="CCDS" id="CCDS19271.1">
    <molecule id="O55203-1"/>
</dbReference>
<dbReference type="CCDS" id="CCDS80276.1">
    <molecule id="O55203-2"/>
</dbReference>
<dbReference type="CCDS" id="CCDS80278.1">
    <molecule id="O55203-3"/>
</dbReference>
<dbReference type="RefSeq" id="NP_001070866.1">
    <molecule id="O55203-3"/>
    <property type="nucleotide sequence ID" value="NM_001077398.2"/>
</dbReference>
<dbReference type="RefSeq" id="NP_001273277.1">
    <molecule id="O55203-2"/>
    <property type="nucleotide sequence ID" value="NM_001286348.1"/>
</dbReference>
<dbReference type="RefSeq" id="NP_034828.3">
    <molecule id="O55203-1"/>
    <property type="nucleotide sequence ID" value="NM_010698.4"/>
</dbReference>
<dbReference type="RefSeq" id="XP_006503817.1">
    <molecule id="O55203-2"/>
    <property type="nucleotide sequence ID" value="XM_006503754.5"/>
</dbReference>
<dbReference type="RefSeq" id="XP_006503819.1">
    <property type="nucleotide sequence ID" value="XM_006503756.3"/>
</dbReference>
<dbReference type="SMR" id="O55203"/>
<dbReference type="BioGRID" id="201126">
    <property type="interactions" value="34"/>
</dbReference>
<dbReference type="DIP" id="DIP-46444N"/>
<dbReference type="FunCoup" id="O55203">
    <property type="interactions" value="379"/>
</dbReference>
<dbReference type="IntAct" id="O55203">
    <property type="interactions" value="20"/>
</dbReference>
<dbReference type="STRING" id="10090.ENSMUSP00000067737"/>
<dbReference type="iPTMnet" id="O55203"/>
<dbReference type="PhosphoSitePlus" id="O55203"/>
<dbReference type="PaxDb" id="10090-ENSMUSP00000067737"/>
<dbReference type="PeptideAtlas" id="O55203"/>
<dbReference type="ProteomicsDB" id="265052">
    <molecule id="O55203-1"/>
</dbReference>
<dbReference type="ProteomicsDB" id="265053">
    <molecule id="O55203-2"/>
</dbReference>
<dbReference type="ProteomicsDB" id="265054">
    <molecule id="O55203-3"/>
</dbReference>
<dbReference type="Antibodypedia" id="4310">
    <property type="antibodies" value="237 antibodies from 28 providers"/>
</dbReference>
<dbReference type="DNASU" id="16826"/>
<dbReference type="Ensembl" id="ENSMUST00000070748.10">
    <molecule id="O55203-1"/>
    <property type="protein sequence ID" value="ENSMUSP00000067737.6"/>
    <property type="gene ID" value="ENSMUSG00000039706.12"/>
</dbReference>
<dbReference type="Ensembl" id="ENSMUST00000199256.5">
    <molecule id="O55203-3"/>
    <property type="protein sequence ID" value="ENSMUSP00000143775.2"/>
    <property type="gene ID" value="ENSMUSG00000039706.12"/>
</dbReference>
<dbReference type="Ensembl" id="ENSMUST00000199534.5">
    <molecule id="O55203-2"/>
    <property type="protein sequence ID" value="ENSMUSP00000142442.2"/>
    <property type="gene ID" value="ENSMUSG00000039706.12"/>
</dbReference>
<dbReference type="GeneID" id="16826"/>
<dbReference type="KEGG" id="mmu:16826"/>
<dbReference type="UCSC" id="uc008xis.2">
    <molecule id="O55203-3"/>
    <property type="organism name" value="mouse"/>
</dbReference>
<dbReference type="UCSC" id="uc008xit.2">
    <molecule id="O55203-1"/>
    <property type="organism name" value="mouse"/>
</dbReference>
<dbReference type="UCSC" id="uc008xiu.2">
    <molecule id="O55203-2"/>
    <property type="organism name" value="mouse"/>
</dbReference>
<dbReference type="AGR" id="MGI:894670"/>
<dbReference type="CTD" id="9079"/>
<dbReference type="MGI" id="MGI:894670">
    <property type="gene designation" value="Ldb2"/>
</dbReference>
<dbReference type="VEuPathDB" id="HostDB:ENSMUSG00000039706"/>
<dbReference type="eggNOG" id="KOG2181">
    <property type="taxonomic scope" value="Eukaryota"/>
</dbReference>
<dbReference type="GeneTree" id="ENSGT00390000005639"/>
<dbReference type="HOGENOM" id="CLU_032597_0_0_1"/>
<dbReference type="InParanoid" id="O55203"/>
<dbReference type="OMA" id="TPWNSKP"/>
<dbReference type="OrthoDB" id="774557at2759"/>
<dbReference type="PhylomeDB" id="O55203"/>
<dbReference type="TreeFam" id="TF319923"/>
<dbReference type="BioGRID-ORCS" id="16826">
    <property type="hits" value="2 hits in 76 CRISPR screens"/>
</dbReference>
<dbReference type="ChiTaRS" id="Ldb2">
    <property type="organism name" value="mouse"/>
</dbReference>
<dbReference type="PRO" id="PR:O55203"/>
<dbReference type="Proteomes" id="UP000000589">
    <property type="component" value="Chromosome 5"/>
</dbReference>
<dbReference type="RNAct" id="O55203">
    <property type="molecule type" value="protein"/>
</dbReference>
<dbReference type="Bgee" id="ENSMUSG00000039706">
    <property type="expression patterns" value="Expressed in embryonic brain and 230 other cell types or tissues"/>
</dbReference>
<dbReference type="ExpressionAtlas" id="O55203">
    <property type="expression patterns" value="baseline and differential"/>
</dbReference>
<dbReference type="GO" id="GO:0031252">
    <property type="term" value="C:cell leading edge"/>
    <property type="evidence" value="ECO:0000314"/>
    <property type="project" value="UniProtKB"/>
</dbReference>
<dbReference type="GO" id="GO:0005730">
    <property type="term" value="C:nucleolus"/>
    <property type="evidence" value="ECO:0007669"/>
    <property type="project" value="Ensembl"/>
</dbReference>
<dbReference type="GO" id="GO:0005654">
    <property type="term" value="C:nucleoplasm"/>
    <property type="evidence" value="ECO:0007669"/>
    <property type="project" value="Ensembl"/>
</dbReference>
<dbReference type="GO" id="GO:0005634">
    <property type="term" value="C:nucleus"/>
    <property type="evidence" value="ECO:0000250"/>
    <property type="project" value="UniProtKB"/>
</dbReference>
<dbReference type="GO" id="GO:0005886">
    <property type="term" value="C:plasma membrane"/>
    <property type="evidence" value="ECO:0007669"/>
    <property type="project" value="Ensembl"/>
</dbReference>
<dbReference type="GO" id="GO:0005667">
    <property type="term" value="C:transcription regulator complex"/>
    <property type="evidence" value="ECO:0000314"/>
    <property type="project" value="MGI"/>
</dbReference>
<dbReference type="GO" id="GO:0019899">
    <property type="term" value="F:enzyme binding"/>
    <property type="evidence" value="ECO:0000353"/>
    <property type="project" value="UniProtKB"/>
</dbReference>
<dbReference type="GO" id="GO:0030274">
    <property type="term" value="F:LIM domain binding"/>
    <property type="evidence" value="ECO:0000353"/>
    <property type="project" value="MGI"/>
</dbReference>
<dbReference type="GO" id="GO:0010669">
    <property type="term" value="P:epithelial structure maintenance"/>
    <property type="evidence" value="ECO:0000316"/>
    <property type="project" value="MGI"/>
</dbReference>
<dbReference type="GO" id="GO:0001942">
    <property type="term" value="P:hair follicle development"/>
    <property type="evidence" value="ECO:0000316"/>
    <property type="project" value="MGI"/>
</dbReference>
<dbReference type="GO" id="GO:0044089">
    <property type="term" value="P:positive regulation of cellular component biogenesis"/>
    <property type="evidence" value="ECO:0000316"/>
    <property type="project" value="MGI"/>
</dbReference>
<dbReference type="GO" id="GO:0045944">
    <property type="term" value="P:positive regulation of transcription by RNA polymerase II"/>
    <property type="evidence" value="ECO:0000316"/>
    <property type="project" value="MGI"/>
</dbReference>
<dbReference type="GO" id="GO:0030334">
    <property type="term" value="P:regulation of cell migration"/>
    <property type="evidence" value="ECO:0000315"/>
    <property type="project" value="UniProtKB"/>
</dbReference>
<dbReference type="GO" id="GO:0043549">
    <property type="term" value="P:regulation of kinase activity"/>
    <property type="evidence" value="ECO:0000314"/>
    <property type="project" value="UniProtKB"/>
</dbReference>
<dbReference type="GO" id="GO:0035019">
    <property type="term" value="P:somatic stem cell population maintenance"/>
    <property type="evidence" value="ECO:0000316"/>
    <property type="project" value="MGI"/>
</dbReference>
<dbReference type="FunFam" id="2.10.110.10:FF:000063">
    <property type="entry name" value="LIM domain-binding protein 2 isoform X2"/>
    <property type="match status" value="1"/>
</dbReference>
<dbReference type="Gene3D" id="2.10.110.10">
    <property type="entry name" value="Cysteine Rich Protein"/>
    <property type="match status" value="1"/>
</dbReference>
<dbReference type="InterPro" id="IPR041363">
    <property type="entry name" value="LID"/>
</dbReference>
<dbReference type="InterPro" id="IPR029005">
    <property type="entry name" value="LIM-bd/SEUSS"/>
</dbReference>
<dbReference type="PANTHER" id="PTHR10378">
    <property type="entry name" value="LIM DOMAIN-BINDING PROTEIN"/>
    <property type="match status" value="1"/>
</dbReference>
<dbReference type="Pfam" id="PF17916">
    <property type="entry name" value="LID"/>
    <property type="match status" value="1"/>
</dbReference>
<dbReference type="Pfam" id="PF01803">
    <property type="entry name" value="LIM_bind"/>
    <property type="match status" value="1"/>
</dbReference>
<dbReference type="PROSITE" id="PS51957">
    <property type="entry name" value="LID"/>
    <property type="match status" value="1"/>
</dbReference>
<gene>
    <name type="primary">Ldb2</name>
    <name type="synonym">Clim1</name>
</gene>
<reference key="1">
    <citation type="journal article" date="1997" name="Genes Dev.">
        <title>A family of LIM domain-associated cofactors confer transcriptional synergism between LIM and Otx homeodomain proteins.</title>
        <authorList>
            <person name="Bach I."/>
            <person name="Carriere C."/>
            <person name="Ostendorff H.P."/>
            <person name="Andersen B."/>
            <person name="Rosenfeld M.G."/>
        </authorList>
    </citation>
    <scope>NUCLEOTIDE SEQUENCE [MRNA] (ISOFORMS 1 AND 2)</scope>
    <scope>FUNCTION</scope>
    <scope>INTERACTION WITH LHX3 AND PITX1</scope>
    <scope>TISSUE SPECIFICITY</scope>
    <scope>DEVELOPMENTAL STAGE</scope>
</reference>
<reference key="2">
    <citation type="journal article" date="2005" name="Science">
        <title>The transcriptional landscape of the mammalian genome.</title>
        <authorList>
            <person name="Carninci P."/>
            <person name="Kasukawa T."/>
            <person name="Katayama S."/>
            <person name="Gough J."/>
            <person name="Frith M.C."/>
            <person name="Maeda N."/>
            <person name="Oyama R."/>
            <person name="Ravasi T."/>
            <person name="Lenhard B."/>
            <person name="Wells C."/>
            <person name="Kodzius R."/>
            <person name="Shimokawa K."/>
            <person name="Bajic V.B."/>
            <person name="Brenner S.E."/>
            <person name="Batalov S."/>
            <person name="Forrest A.R."/>
            <person name="Zavolan M."/>
            <person name="Davis M.J."/>
            <person name="Wilming L.G."/>
            <person name="Aidinis V."/>
            <person name="Allen J.E."/>
            <person name="Ambesi-Impiombato A."/>
            <person name="Apweiler R."/>
            <person name="Aturaliya R.N."/>
            <person name="Bailey T.L."/>
            <person name="Bansal M."/>
            <person name="Baxter L."/>
            <person name="Beisel K.W."/>
            <person name="Bersano T."/>
            <person name="Bono H."/>
            <person name="Chalk A.M."/>
            <person name="Chiu K.P."/>
            <person name="Choudhary V."/>
            <person name="Christoffels A."/>
            <person name="Clutterbuck D.R."/>
            <person name="Crowe M.L."/>
            <person name="Dalla E."/>
            <person name="Dalrymple B.P."/>
            <person name="de Bono B."/>
            <person name="Della Gatta G."/>
            <person name="di Bernardo D."/>
            <person name="Down T."/>
            <person name="Engstrom P."/>
            <person name="Fagiolini M."/>
            <person name="Faulkner G."/>
            <person name="Fletcher C.F."/>
            <person name="Fukushima T."/>
            <person name="Furuno M."/>
            <person name="Futaki S."/>
            <person name="Gariboldi M."/>
            <person name="Georgii-Hemming P."/>
            <person name="Gingeras T.R."/>
            <person name="Gojobori T."/>
            <person name="Green R.E."/>
            <person name="Gustincich S."/>
            <person name="Harbers M."/>
            <person name="Hayashi Y."/>
            <person name="Hensch T.K."/>
            <person name="Hirokawa N."/>
            <person name="Hill D."/>
            <person name="Huminiecki L."/>
            <person name="Iacono M."/>
            <person name="Ikeo K."/>
            <person name="Iwama A."/>
            <person name="Ishikawa T."/>
            <person name="Jakt M."/>
            <person name="Kanapin A."/>
            <person name="Katoh M."/>
            <person name="Kawasawa Y."/>
            <person name="Kelso J."/>
            <person name="Kitamura H."/>
            <person name="Kitano H."/>
            <person name="Kollias G."/>
            <person name="Krishnan S.P."/>
            <person name="Kruger A."/>
            <person name="Kummerfeld S.K."/>
            <person name="Kurochkin I.V."/>
            <person name="Lareau L.F."/>
            <person name="Lazarevic D."/>
            <person name="Lipovich L."/>
            <person name="Liu J."/>
            <person name="Liuni S."/>
            <person name="McWilliam S."/>
            <person name="Madan Babu M."/>
            <person name="Madera M."/>
            <person name="Marchionni L."/>
            <person name="Matsuda H."/>
            <person name="Matsuzawa S."/>
            <person name="Miki H."/>
            <person name="Mignone F."/>
            <person name="Miyake S."/>
            <person name="Morris K."/>
            <person name="Mottagui-Tabar S."/>
            <person name="Mulder N."/>
            <person name="Nakano N."/>
            <person name="Nakauchi H."/>
            <person name="Ng P."/>
            <person name="Nilsson R."/>
            <person name="Nishiguchi S."/>
            <person name="Nishikawa S."/>
            <person name="Nori F."/>
            <person name="Ohara O."/>
            <person name="Okazaki Y."/>
            <person name="Orlando V."/>
            <person name="Pang K.C."/>
            <person name="Pavan W.J."/>
            <person name="Pavesi G."/>
            <person name="Pesole G."/>
            <person name="Petrovsky N."/>
            <person name="Piazza S."/>
            <person name="Reed J."/>
            <person name="Reid J.F."/>
            <person name="Ring B.Z."/>
            <person name="Ringwald M."/>
            <person name="Rost B."/>
            <person name="Ruan Y."/>
            <person name="Salzberg S.L."/>
            <person name="Sandelin A."/>
            <person name="Schneider C."/>
            <person name="Schoenbach C."/>
            <person name="Sekiguchi K."/>
            <person name="Semple C.A."/>
            <person name="Seno S."/>
            <person name="Sessa L."/>
            <person name="Sheng Y."/>
            <person name="Shibata Y."/>
            <person name="Shimada H."/>
            <person name="Shimada K."/>
            <person name="Silva D."/>
            <person name="Sinclair B."/>
            <person name="Sperling S."/>
            <person name="Stupka E."/>
            <person name="Sugiura K."/>
            <person name="Sultana R."/>
            <person name="Takenaka Y."/>
            <person name="Taki K."/>
            <person name="Tammoja K."/>
            <person name="Tan S.L."/>
            <person name="Tang S."/>
            <person name="Taylor M.S."/>
            <person name="Tegner J."/>
            <person name="Teichmann S.A."/>
            <person name="Ueda H.R."/>
            <person name="van Nimwegen E."/>
            <person name="Verardo R."/>
            <person name="Wei C.L."/>
            <person name="Yagi K."/>
            <person name="Yamanishi H."/>
            <person name="Zabarovsky E."/>
            <person name="Zhu S."/>
            <person name="Zimmer A."/>
            <person name="Hide W."/>
            <person name="Bult C."/>
            <person name="Grimmond S.M."/>
            <person name="Teasdale R.D."/>
            <person name="Liu E.T."/>
            <person name="Brusic V."/>
            <person name="Quackenbush J."/>
            <person name="Wahlestedt C."/>
            <person name="Mattick J.S."/>
            <person name="Hume D.A."/>
            <person name="Kai C."/>
            <person name="Sasaki D."/>
            <person name="Tomaru Y."/>
            <person name="Fukuda S."/>
            <person name="Kanamori-Katayama M."/>
            <person name="Suzuki M."/>
            <person name="Aoki J."/>
            <person name="Arakawa T."/>
            <person name="Iida J."/>
            <person name="Imamura K."/>
            <person name="Itoh M."/>
            <person name="Kato T."/>
            <person name="Kawaji H."/>
            <person name="Kawagashira N."/>
            <person name="Kawashima T."/>
            <person name="Kojima M."/>
            <person name="Kondo S."/>
            <person name="Konno H."/>
            <person name="Nakano K."/>
            <person name="Ninomiya N."/>
            <person name="Nishio T."/>
            <person name="Okada M."/>
            <person name="Plessy C."/>
            <person name="Shibata K."/>
            <person name="Shiraki T."/>
            <person name="Suzuki S."/>
            <person name="Tagami M."/>
            <person name="Waki K."/>
            <person name="Watahiki A."/>
            <person name="Okamura-Oho Y."/>
            <person name="Suzuki H."/>
            <person name="Kawai J."/>
            <person name="Hayashizaki Y."/>
        </authorList>
    </citation>
    <scope>NUCLEOTIDE SEQUENCE [LARGE SCALE MRNA] (ISOFORM 3)</scope>
    <source>
        <strain>C57BL/6J</strain>
        <tissue>Embryonic kidney</tissue>
    </source>
</reference>
<reference key="3">
    <citation type="journal article" date="2004" name="Genome Res.">
        <title>The status, quality, and expansion of the NIH full-length cDNA project: the Mammalian Gene Collection (MGC).</title>
        <authorList>
            <consortium name="The MGC Project Team"/>
        </authorList>
    </citation>
    <scope>NUCLEOTIDE SEQUENCE [LARGE SCALE MRNA] (ISOFORM 1)</scope>
    <source>
        <strain>C57BL/6J</strain>
        <tissue>Brain</tissue>
    </source>
</reference>
<reference key="4">
    <citation type="journal article" date="1998" name="Proc. Natl. Acad. Sci. U.S.A.">
        <title>Mouse deformed epidermal autoregulatory factor 1 recruits a LIM domain factor, LMO-4, and CLIM coregulators.</title>
        <authorList>
            <person name="Sugihara T.M."/>
            <person name="Bach I."/>
            <person name="Kioussi C."/>
            <person name="Rosenfeld M.G."/>
            <person name="Andersen B."/>
        </authorList>
    </citation>
    <scope>INTERACTION WITH LMO4</scope>
    <scope>DEVELOPMENTAL STAGE</scope>
</reference>
<reference key="5">
    <citation type="journal article" date="1999" name="Mech. Dev.">
        <title>Characterization of Lhx9, a novel LIM/homeobox gene expressed by the pioneer neurons in the mouse cerebral cortex.</title>
        <authorList>
            <person name="Bertuzzi S."/>
            <person name="Porter F.D."/>
            <person name="Pitts A."/>
            <person name="Kumar M."/>
            <person name="Agulnick A."/>
            <person name="Wassif C."/>
            <person name="Westphal H."/>
        </authorList>
    </citation>
    <scope>INTERACTION WITH LHX9</scope>
</reference>
<reference key="6">
    <citation type="journal article" date="2002" name="Nature">
        <title>Ubiquitination-dependent cofactor exchange on LIM homeodomain transcription factors.</title>
        <authorList>
            <person name="Ostendorff H.P."/>
            <person name="Peirano R.I."/>
            <person name="Peters M.A."/>
            <person name="Schluter A."/>
            <person name="Bossenz M."/>
            <person name="Scheffner M."/>
            <person name="Bach I."/>
        </authorList>
    </citation>
    <scope>INTERACTION WITH RLIM</scope>
    <scope>UBIQUITINATION</scope>
</reference>
<reference key="7">
    <citation type="journal article" date="2006" name="J. Biochem.">
        <title>Spliced isoforms of LIM-domain-binding protein (CLIM/NLI/Ldb) lacking the LIM-interaction domain.</title>
        <authorList>
            <person name="Tran Y.H."/>
            <person name="Xu Z."/>
            <person name="Kato A."/>
            <person name="Mistry A.C."/>
            <person name="Goya Y."/>
            <person name="Taira M."/>
            <person name="Brandt S.J."/>
            <person name="Hirose S."/>
        </authorList>
    </citation>
    <scope>ALTERNATIVE SPLICING</scope>
</reference>
<reference key="8">
    <citation type="journal article" date="2009" name="Mol. Biol. Cell">
        <title>The Ldb1 and Ldb2 transcriptional cofactors interact with the Ste20-like kinase SLK and regulate cell migration.</title>
        <authorList>
            <person name="Storbeck C.J."/>
            <person name="Wagner S."/>
            <person name="O'Reilly P."/>
            <person name="McKay M."/>
            <person name="Parks R.J."/>
            <person name="Westphal H."/>
            <person name="Sabourin L.A."/>
        </authorList>
    </citation>
    <scope>INTERACTION WITH SLK</scope>
    <scope>SUBCELLULAR LOCATION</scope>
    <scope>FUNCTION</scope>
</reference>
<feature type="chain" id="PRO_0000084388" description="LIM domain-binding protein 2">
    <location>
        <begin position="1"/>
        <end position="373"/>
    </location>
</feature>
<feature type="domain" description="LIM interaction domain (LID)" evidence="1">
    <location>
        <begin position="298"/>
        <end position="337"/>
    </location>
</feature>
<feature type="region of interest" description="Disordered" evidence="2">
    <location>
        <begin position="244"/>
        <end position="287"/>
    </location>
</feature>
<feature type="region of interest" description="Disordered" evidence="2">
    <location>
        <begin position="327"/>
        <end position="373"/>
    </location>
</feature>
<feature type="compositionally biased region" description="Low complexity" evidence="2">
    <location>
        <begin position="263"/>
        <end position="280"/>
    </location>
</feature>
<feature type="compositionally biased region" description="Polar residues" evidence="2">
    <location>
        <begin position="341"/>
        <end position="373"/>
    </location>
</feature>
<feature type="splice variant" id="VSP_027829" description="In isoform 3." evidence="7">
    <location>
        <begin position="296"/>
        <end position="297"/>
    </location>
</feature>
<feature type="splice variant" id="VSP_014369" description="In isoform 2 and isoform 3." evidence="7 8">
    <original>DVMVVGEPTLMGGEFGDEDERLITRLENTQYDAA</original>
    <variation>GLGAIPNCSLNPGRDGDLCHSTAVTPSGQFKEKH</variation>
    <location>
        <begin position="298"/>
        <end position="331"/>
    </location>
</feature>
<feature type="splice variant" id="VSP_014370" description="In isoform 2 and isoform 3." evidence="7 8">
    <location>
        <begin position="332"/>
        <end position="373"/>
    </location>
</feature>
<feature type="sequence conflict" description="In Ref. 1; AAB96884/AAB96886." evidence="9" ref="1">
    <original>A</original>
    <variation>G</variation>
    <location>
        <position position="272"/>
    </location>
</feature>
<feature type="sequence conflict" description="In Ref. 1; AAB96884/AAB96886." evidence="9" ref="1">
    <original>A</original>
    <variation>S</variation>
    <location>
        <position position="279"/>
    </location>
</feature>
<protein>
    <recommendedName>
        <fullName>LIM domain-binding protein 2</fullName>
        <shortName>LDB-2</shortName>
    </recommendedName>
    <alternativeName>
        <fullName>Carboxyl-terminal LIM domain-binding protein 1</fullName>
        <shortName>CLIM-1</shortName>
    </alternativeName>
    <alternativeName>
        <fullName>LIM domain-binding factor CLIM1</fullName>
    </alternativeName>
</protein>
<accession>O55203</accession>
<accession>O55205</accession>
<accession>Q3UHY1</accession>
<accession>Q6AXE6</accession>